<name>RL27_DESDA</name>
<feature type="chain" id="PRO_1000146526" description="Large ribosomal subunit protein bL27">
    <location>
        <begin position="1"/>
        <end position="89"/>
    </location>
</feature>
<feature type="region of interest" description="Disordered" evidence="2">
    <location>
        <begin position="1"/>
        <end position="26"/>
    </location>
</feature>
<keyword id="KW-0687">Ribonucleoprotein</keyword>
<keyword id="KW-0689">Ribosomal protein</keyword>
<gene>
    <name evidence="1" type="primary">rpmA</name>
    <name type="ordered locus">Ddes_2249</name>
</gene>
<organism>
    <name type="scientific">Desulfovibrio desulfuricans (strain ATCC 27774 / DSM 6949 / MB)</name>
    <dbReference type="NCBI Taxonomy" id="525146"/>
    <lineage>
        <taxon>Bacteria</taxon>
        <taxon>Pseudomonadati</taxon>
        <taxon>Thermodesulfobacteriota</taxon>
        <taxon>Desulfovibrionia</taxon>
        <taxon>Desulfovibrionales</taxon>
        <taxon>Desulfovibrionaceae</taxon>
        <taxon>Desulfovibrio</taxon>
    </lineage>
</organism>
<proteinExistence type="inferred from homology"/>
<comment type="similarity">
    <text evidence="1">Belongs to the bacterial ribosomal protein bL27 family.</text>
</comment>
<evidence type="ECO:0000255" key="1">
    <source>
        <dbReference type="HAMAP-Rule" id="MF_00539"/>
    </source>
</evidence>
<evidence type="ECO:0000256" key="2">
    <source>
        <dbReference type="SAM" id="MobiDB-lite"/>
    </source>
</evidence>
<evidence type="ECO:0000305" key="3"/>
<reference key="1">
    <citation type="submission" date="2009-01" db="EMBL/GenBank/DDBJ databases">
        <title>Complete sequence of Desulfovibrio desulfuricans subsp. desulfuricans str. ATCC 27774.</title>
        <authorList>
            <consortium name="US DOE Joint Genome Institute"/>
            <person name="Lucas S."/>
            <person name="Copeland A."/>
            <person name="Lapidus A."/>
            <person name="Glavina del Rio T."/>
            <person name="Tice H."/>
            <person name="Bruce D."/>
            <person name="Goodwin L."/>
            <person name="Pitluck S."/>
            <person name="Sims D."/>
            <person name="Lu M."/>
            <person name="Kiss H."/>
            <person name="Meineke L."/>
            <person name="Brettin T."/>
            <person name="Detter J.C."/>
            <person name="Han C."/>
            <person name="Larimer F."/>
            <person name="Land M."/>
            <person name="Hauser L."/>
            <person name="Kyrpides N."/>
            <person name="Ovchinnikova G."/>
            <person name="Hazen T.C."/>
        </authorList>
    </citation>
    <scope>NUCLEOTIDE SEQUENCE [LARGE SCALE GENOMIC DNA]</scope>
    <source>
        <strain>ATCC 27774 / DSM 6949 / MB</strain>
    </source>
</reference>
<accession>B8J4L4</accession>
<dbReference type="EMBL" id="CP001358">
    <property type="protein sequence ID" value="ACL50144.1"/>
    <property type="molecule type" value="Genomic_DNA"/>
</dbReference>
<dbReference type="SMR" id="B8J4L4"/>
<dbReference type="STRING" id="525146.Ddes_2249"/>
<dbReference type="KEGG" id="dds:Ddes_2249"/>
<dbReference type="eggNOG" id="COG0211">
    <property type="taxonomic scope" value="Bacteria"/>
</dbReference>
<dbReference type="HOGENOM" id="CLU_095424_4_0_7"/>
<dbReference type="GO" id="GO:0022625">
    <property type="term" value="C:cytosolic large ribosomal subunit"/>
    <property type="evidence" value="ECO:0007669"/>
    <property type="project" value="TreeGrafter"/>
</dbReference>
<dbReference type="GO" id="GO:0003735">
    <property type="term" value="F:structural constituent of ribosome"/>
    <property type="evidence" value="ECO:0007669"/>
    <property type="project" value="InterPro"/>
</dbReference>
<dbReference type="GO" id="GO:0006412">
    <property type="term" value="P:translation"/>
    <property type="evidence" value="ECO:0007669"/>
    <property type="project" value="UniProtKB-UniRule"/>
</dbReference>
<dbReference type="FunFam" id="2.40.50.100:FF:000060">
    <property type="entry name" value="Apicoplast ribosomal protein L27"/>
    <property type="match status" value="1"/>
</dbReference>
<dbReference type="Gene3D" id="2.40.50.100">
    <property type="match status" value="1"/>
</dbReference>
<dbReference type="HAMAP" id="MF_00539">
    <property type="entry name" value="Ribosomal_bL27"/>
    <property type="match status" value="1"/>
</dbReference>
<dbReference type="InterPro" id="IPR001684">
    <property type="entry name" value="Ribosomal_bL27"/>
</dbReference>
<dbReference type="NCBIfam" id="TIGR00062">
    <property type="entry name" value="L27"/>
    <property type="match status" value="1"/>
</dbReference>
<dbReference type="PANTHER" id="PTHR15893:SF0">
    <property type="entry name" value="LARGE RIBOSOMAL SUBUNIT PROTEIN BL27M"/>
    <property type="match status" value="1"/>
</dbReference>
<dbReference type="PANTHER" id="PTHR15893">
    <property type="entry name" value="RIBOSOMAL PROTEIN L27"/>
    <property type="match status" value="1"/>
</dbReference>
<dbReference type="Pfam" id="PF01016">
    <property type="entry name" value="Ribosomal_L27"/>
    <property type="match status" value="1"/>
</dbReference>
<dbReference type="PRINTS" id="PR00063">
    <property type="entry name" value="RIBOSOMALL27"/>
</dbReference>
<dbReference type="SUPFAM" id="SSF110324">
    <property type="entry name" value="Ribosomal L27 protein-like"/>
    <property type="match status" value="1"/>
</dbReference>
<sequence>MAQKKAGGSSRNGRDSVGQRRGVKRFGGQRVLAGNILVRQLGTTVHPGVNVGMGRDFTLFAKIDGVVRFEKYIRKRRVLTRVHVEAAAS</sequence>
<protein>
    <recommendedName>
        <fullName evidence="1">Large ribosomal subunit protein bL27</fullName>
    </recommendedName>
    <alternativeName>
        <fullName evidence="3">50S ribosomal protein L27</fullName>
    </alternativeName>
</protein>